<proteinExistence type="evidence at protein level"/>
<comment type="function">
    <text evidence="1">Converts GTP to 7,8-dihydroneopterin triphosphate.</text>
</comment>
<comment type="catalytic activity">
    <reaction evidence="1">
        <text>GTP + H2O = 7,8-dihydroneopterin 3'-triphosphate + formate + H(+)</text>
        <dbReference type="Rhea" id="RHEA:17473"/>
        <dbReference type="ChEBI" id="CHEBI:15377"/>
        <dbReference type="ChEBI" id="CHEBI:15378"/>
        <dbReference type="ChEBI" id="CHEBI:15740"/>
        <dbReference type="ChEBI" id="CHEBI:37565"/>
        <dbReference type="ChEBI" id="CHEBI:58462"/>
        <dbReference type="EC" id="3.5.4.16"/>
    </reaction>
</comment>
<comment type="pathway">
    <text evidence="1">Cofactor biosynthesis; 7,8-dihydroneopterin triphosphate biosynthesis; 7,8-dihydroneopterin triphosphate from GTP: step 1/1.</text>
</comment>
<comment type="similarity">
    <text evidence="1">Belongs to the GTP cyclohydrolase IV family.</text>
</comment>
<protein>
    <recommendedName>
        <fullName evidence="1">GTP cyclohydrolase FolE2</fullName>
        <ecNumber evidence="1">3.5.4.16</ecNumber>
    </recommendedName>
</protein>
<evidence type="ECO:0000255" key="1">
    <source>
        <dbReference type="HAMAP-Rule" id="MF_01527"/>
    </source>
</evidence>
<evidence type="ECO:0007829" key="2">
    <source>
        <dbReference type="PDB" id="8G8V"/>
    </source>
</evidence>
<dbReference type="EC" id="3.5.4.16" evidence="1"/>
<dbReference type="EMBL" id="BX571966">
    <property type="protein sequence ID" value="CAH39236.1"/>
    <property type="molecule type" value="Genomic_DNA"/>
</dbReference>
<dbReference type="RefSeq" id="WP_004195713.1">
    <property type="nucleotide sequence ID" value="NZ_CP009537.1"/>
</dbReference>
<dbReference type="RefSeq" id="YP_111767.1">
    <property type="nucleotide sequence ID" value="NC_006351.1"/>
</dbReference>
<dbReference type="PDB" id="8G6C">
    <property type="method" value="X-ray"/>
    <property type="resolution" value="2.82 A"/>
    <property type="chains" value="A/B=1-269"/>
</dbReference>
<dbReference type="PDB" id="8G8V">
    <property type="method" value="X-ray"/>
    <property type="resolution" value="2.03 A"/>
    <property type="chains" value="A/B=1-269"/>
</dbReference>
<dbReference type="PDBsum" id="8G6C"/>
<dbReference type="PDBsum" id="8G8V"/>
<dbReference type="SMR" id="Q63JF5"/>
<dbReference type="STRING" id="272560.BPSS1761"/>
<dbReference type="GeneID" id="93063968"/>
<dbReference type="KEGG" id="bps:BPSS1761"/>
<dbReference type="PATRIC" id="fig|272560.51.peg.5192"/>
<dbReference type="eggNOG" id="COG1469">
    <property type="taxonomic scope" value="Bacteria"/>
</dbReference>
<dbReference type="UniPathway" id="UPA00848">
    <property type="reaction ID" value="UER00151"/>
</dbReference>
<dbReference type="Proteomes" id="UP000000605">
    <property type="component" value="Chromosome 2"/>
</dbReference>
<dbReference type="GO" id="GO:0003934">
    <property type="term" value="F:GTP cyclohydrolase I activity"/>
    <property type="evidence" value="ECO:0007669"/>
    <property type="project" value="UniProtKB-UniRule"/>
</dbReference>
<dbReference type="GO" id="GO:0046654">
    <property type="term" value="P:tetrahydrofolate biosynthetic process"/>
    <property type="evidence" value="ECO:0007669"/>
    <property type="project" value="UniProtKB-UniRule"/>
</dbReference>
<dbReference type="Gene3D" id="3.10.270.10">
    <property type="entry name" value="Urate Oxidase"/>
    <property type="match status" value="1"/>
</dbReference>
<dbReference type="HAMAP" id="MF_01527_B">
    <property type="entry name" value="GTP_cyclohydrol_B"/>
    <property type="match status" value="1"/>
</dbReference>
<dbReference type="InterPro" id="IPR022838">
    <property type="entry name" value="GTP_cyclohydrolase_FolE2"/>
</dbReference>
<dbReference type="InterPro" id="IPR003801">
    <property type="entry name" value="GTP_cyclohydrolase_FolE2/MptA"/>
</dbReference>
<dbReference type="NCBIfam" id="NF010200">
    <property type="entry name" value="PRK13674.1-1"/>
    <property type="match status" value="1"/>
</dbReference>
<dbReference type="PANTHER" id="PTHR36445">
    <property type="entry name" value="GTP CYCLOHYDROLASE MPTA"/>
    <property type="match status" value="1"/>
</dbReference>
<dbReference type="PANTHER" id="PTHR36445:SF1">
    <property type="entry name" value="GTP CYCLOHYDROLASE MPTA"/>
    <property type="match status" value="1"/>
</dbReference>
<dbReference type="Pfam" id="PF02649">
    <property type="entry name" value="GCHY-1"/>
    <property type="match status" value="1"/>
</dbReference>
<feature type="chain" id="PRO_0000147707" description="GTP cyclohydrolase FolE2">
    <location>
        <begin position="1"/>
        <end position="269"/>
    </location>
</feature>
<feature type="site" description="May be catalytically important" evidence="1">
    <location>
        <position position="154"/>
    </location>
</feature>
<feature type="strand" evidence="2">
    <location>
        <begin position="24"/>
        <end position="39"/>
    </location>
</feature>
<feature type="strand" evidence="2">
    <location>
        <begin position="45"/>
        <end position="58"/>
    </location>
</feature>
<feature type="helix" evidence="2">
    <location>
        <begin position="67"/>
        <end position="76"/>
    </location>
</feature>
<feature type="helix" evidence="2">
    <location>
        <begin position="83"/>
        <end position="96"/>
    </location>
</feature>
<feature type="strand" evidence="2">
    <location>
        <begin position="102"/>
        <end position="115"/>
    </location>
</feature>
<feature type="turn" evidence="2">
    <location>
        <begin position="117"/>
        <end position="119"/>
    </location>
</feature>
<feature type="strand" evidence="2">
    <location>
        <begin position="122"/>
        <end position="136"/>
    </location>
</feature>
<feature type="strand" evidence="2">
    <location>
        <begin position="139"/>
        <end position="153"/>
    </location>
</feature>
<feature type="helix" evidence="2">
    <location>
        <begin position="155"/>
        <end position="160"/>
    </location>
</feature>
<feature type="strand" evidence="2">
    <location>
        <begin position="167"/>
        <end position="180"/>
    </location>
</feature>
<feature type="helix" evidence="2">
    <location>
        <begin position="184"/>
        <end position="194"/>
    </location>
</feature>
<feature type="strand" evidence="2">
    <location>
        <begin position="195"/>
        <end position="197"/>
    </location>
</feature>
<feature type="helix" evidence="2">
    <location>
        <begin position="205"/>
        <end position="217"/>
    </location>
</feature>
<feature type="helix" evidence="2">
    <location>
        <begin position="222"/>
        <end position="234"/>
    </location>
</feature>
<feature type="strand" evidence="2">
    <location>
        <begin position="239"/>
        <end position="248"/>
    </location>
</feature>
<feature type="strand" evidence="2">
    <location>
        <begin position="253"/>
        <end position="264"/>
    </location>
</feature>
<name>GCH4_BURPS</name>
<organism>
    <name type="scientific">Burkholderia pseudomallei (strain K96243)</name>
    <dbReference type="NCBI Taxonomy" id="272560"/>
    <lineage>
        <taxon>Bacteria</taxon>
        <taxon>Pseudomonadati</taxon>
        <taxon>Pseudomonadota</taxon>
        <taxon>Betaproteobacteria</taxon>
        <taxon>Burkholderiales</taxon>
        <taxon>Burkholderiaceae</taxon>
        <taxon>Burkholderia</taxon>
        <taxon>pseudomallei group</taxon>
    </lineage>
</organism>
<keyword id="KW-0002">3D-structure</keyword>
<keyword id="KW-0378">Hydrolase</keyword>
<keyword id="KW-1185">Reference proteome</keyword>
<sequence length="269" mass="30188">MNLMNPEFAMPDVQSTVDTRQMPIQRVGVRAVRHPLTVRTAEGETQATVGTWNLDVHLPADQKGTHMSRFVALLEERGGPLTADAFRTMLATMLEKLEARAGRIEVSFPYFVNKTAPVSGVRSLLDYEVTLTGDVRDGLTRVFAKVLVPVTSLCPCSKKISQYGAHNQRSHVTIDAELAADVPVEDLIRIAEEEASCELWGLLKRPDEKFVTERAYENPKFVEDLVRDVARRLDADERIVAYVLEAENFESIHNHSAYALIERDKRRGA</sequence>
<reference key="1">
    <citation type="journal article" date="2004" name="Proc. Natl. Acad. Sci. U.S.A.">
        <title>Genomic plasticity of the causative agent of melioidosis, Burkholderia pseudomallei.</title>
        <authorList>
            <person name="Holden M.T.G."/>
            <person name="Titball R.W."/>
            <person name="Peacock S.J."/>
            <person name="Cerdeno-Tarraga A.-M."/>
            <person name="Atkins T."/>
            <person name="Crossman L.C."/>
            <person name="Pitt T."/>
            <person name="Churcher C."/>
            <person name="Mungall K.L."/>
            <person name="Bentley S.D."/>
            <person name="Sebaihia M."/>
            <person name="Thomson N.R."/>
            <person name="Bason N."/>
            <person name="Beacham I.R."/>
            <person name="Brooks K."/>
            <person name="Brown K.A."/>
            <person name="Brown N.F."/>
            <person name="Challis G.L."/>
            <person name="Cherevach I."/>
            <person name="Chillingworth T."/>
            <person name="Cronin A."/>
            <person name="Crossett B."/>
            <person name="Davis P."/>
            <person name="DeShazer D."/>
            <person name="Feltwell T."/>
            <person name="Fraser A."/>
            <person name="Hance Z."/>
            <person name="Hauser H."/>
            <person name="Holroyd S."/>
            <person name="Jagels K."/>
            <person name="Keith K.E."/>
            <person name="Maddison M."/>
            <person name="Moule S."/>
            <person name="Price C."/>
            <person name="Quail M.A."/>
            <person name="Rabbinowitsch E."/>
            <person name="Rutherford K."/>
            <person name="Sanders M."/>
            <person name="Simmonds M."/>
            <person name="Songsivilai S."/>
            <person name="Stevens K."/>
            <person name="Tumapa S."/>
            <person name="Vesaratchavest M."/>
            <person name="Whitehead S."/>
            <person name="Yeats C."/>
            <person name="Barrell B.G."/>
            <person name="Oyston P.C.F."/>
            <person name="Parkhill J."/>
        </authorList>
    </citation>
    <scope>NUCLEOTIDE SEQUENCE [LARGE SCALE GENOMIC DNA]</scope>
    <source>
        <strain>K96243</strain>
    </source>
</reference>
<gene>
    <name evidence="1" type="primary">folE2</name>
    <name type="ordered locus">BPSS1761</name>
</gene>
<accession>Q63JF5</accession>